<gene>
    <name type="ordered locus">At5g03600</name>
    <name type="ORF">F17C15.20</name>
</gene>
<keyword id="KW-0378">Hydrolase</keyword>
<keyword id="KW-0442">Lipid degradation</keyword>
<keyword id="KW-0443">Lipid metabolism</keyword>
<keyword id="KW-1185">Reference proteome</keyword>
<dbReference type="EC" id="3.1.1.-"/>
<dbReference type="EMBL" id="AL162506">
    <property type="protein sequence ID" value="CAB82925.1"/>
    <property type="molecule type" value="Genomic_DNA"/>
</dbReference>
<dbReference type="EMBL" id="CP002688">
    <property type="protein sequence ID" value="AED90632.1"/>
    <property type="molecule type" value="Genomic_DNA"/>
</dbReference>
<dbReference type="PIR" id="T48387">
    <property type="entry name" value="T48387"/>
</dbReference>
<dbReference type="RefSeq" id="NP_001318471.1">
    <property type="nucleotide sequence ID" value="NM_001342720.1"/>
</dbReference>
<dbReference type="SMR" id="Q9LZS8"/>
<dbReference type="FunCoup" id="Q9LZS8">
    <property type="interactions" value="24"/>
</dbReference>
<dbReference type="STRING" id="3702.Q9LZS8"/>
<dbReference type="PaxDb" id="3702-AT5G03600.1"/>
<dbReference type="ProteomicsDB" id="247106"/>
<dbReference type="EnsemblPlants" id="AT5G03600.1">
    <property type="protein sequence ID" value="AT5G03600.1"/>
    <property type="gene ID" value="AT5G03600"/>
</dbReference>
<dbReference type="GeneID" id="831781"/>
<dbReference type="Gramene" id="AT5G03600.1">
    <property type="protein sequence ID" value="AT5G03600.1"/>
    <property type="gene ID" value="AT5G03600"/>
</dbReference>
<dbReference type="KEGG" id="ath:AT5G03600"/>
<dbReference type="Araport" id="AT5G03600"/>
<dbReference type="TAIR" id="AT5G03600"/>
<dbReference type="eggNOG" id="ENOG502QU3Y">
    <property type="taxonomic scope" value="Eukaryota"/>
</dbReference>
<dbReference type="HOGENOM" id="CLU_015101_12_0_1"/>
<dbReference type="InParanoid" id="Q9LZS8"/>
<dbReference type="OMA" id="RENICIC"/>
<dbReference type="PhylomeDB" id="Q9LZS8"/>
<dbReference type="PRO" id="PR:Q9LZS8"/>
<dbReference type="Proteomes" id="UP000006548">
    <property type="component" value="Chromosome 5"/>
</dbReference>
<dbReference type="ExpressionAtlas" id="Q9LZS8">
    <property type="expression patterns" value="baseline and differential"/>
</dbReference>
<dbReference type="GO" id="GO:0016788">
    <property type="term" value="F:hydrolase activity, acting on ester bonds"/>
    <property type="evidence" value="ECO:0007669"/>
    <property type="project" value="InterPro"/>
</dbReference>
<dbReference type="GO" id="GO:0016042">
    <property type="term" value="P:lipid catabolic process"/>
    <property type="evidence" value="ECO:0007669"/>
    <property type="project" value="UniProtKB-KW"/>
</dbReference>
<dbReference type="CDD" id="cd01837">
    <property type="entry name" value="SGNH_plant_lipase_like"/>
    <property type="match status" value="1"/>
</dbReference>
<dbReference type="Gene3D" id="3.40.50.1110">
    <property type="entry name" value="SGNH hydrolase"/>
    <property type="match status" value="1"/>
</dbReference>
<dbReference type="InterPro" id="IPR001087">
    <property type="entry name" value="GDSL"/>
</dbReference>
<dbReference type="InterPro" id="IPR036514">
    <property type="entry name" value="SGNH_hydro_sf"/>
</dbReference>
<dbReference type="InterPro" id="IPR035669">
    <property type="entry name" value="SGNH_plant_lipase-like"/>
</dbReference>
<dbReference type="PANTHER" id="PTHR46020:SF32">
    <property type="entry name" value="GDSL ESTERASE_LIPASE"/>
    <property type="match status" value="1"/>
</dbReference>
<dbReference type="PANTHER" id="PTHR46020">
    <property type="entry name" value="OSJNBB0059K02.9 PROTEIN"/>
    <property type="match status" value="1"/>
</dbReference>
<dbReference type="Pfam" id="PF00657">
    <property type="entry name" value="Lipase_GDSL"/>
    <property type="match status" value="1"/>
</dbReference>
<dbReference type="SUPFAM" id="SSF52266">
    <property type="entry name" value="SGNH hydrolase"/>
    <property type="match status" value="1"/>
</dbReference>
<evidence type="ECO:0000250" key="1"/>
<evidence type="ECO:0000305" key="2"/>
<accession>Q9LZS8</accession>
<reference key="1">
    <citation type="journal article" date="2000" name="Nature">
        <title>Sequence and analysis of chromosome 5 of the plant Arabidopsis thaliana.</title>
        <authorList>
            <person name="Tabata S."/>
            <person name="Kaneko T."/>
            <person name="Nakamura Y."/>
            <person name="Kotani H."/>
            <person name="Kato T."/>
            <person name="Asamizu E."/>
            <person name="Miyajima N."/>
            <person name="Sasamoto S."/>
            <person name="Kimura T."/>
            <person name="Hosouchi T."/>
            <person name="Kawashima K."/>
            <person name="Kohara M."/>
            <person name="Matsumoto M."/>
            <person name="Matsuno A."/>
            <person name="Muraki A."/>
            <person name="Nakayama S."/>
            <person name="Nakazaki N."/>
            <person name="Naruo K."/>
            <person name="Okumura S."/>
            <person name="Shinpo S."/>
            <person name="Takeuchi C."/>
            <person name="Wada T."/>
            <person name="Watanabe A."/>
            <person name="Yamada M."/>
            <person name="Yasuda M."/>
            <person name="Sato S."/>
            <person name="de la Bastide M."/>
            <person name="Huang E."/>
            <person name="Spiegel L."/>
            <person name="Gnoj L."/>
            <person name="O'Shaughnessy A."/>
            <person name="Preston R."/>
            <person name="Habermann K."/>
            <person name="Murray J."/>
            <person name="Johnson D."/>
            <person name="Rohlfing T."/>
            <person name="Nelson J."/>
            <person name="Stoneking T."/>
            <person name="Pepin K."/>
            <person name="Spieth J."/>
            <person name="Sekhon M."/>
            <person name="Armstrong J."/>
            <person name="Becker M."/>
            <person name="Belter E."/>
            <person name="Cordum H."/>
            <person name="Cordes M."/>
            <person name="Courtney L."/>
            <person name="Courtney W."/>
            <person name="Dante M."/>
            <person name="Du H."/>
            <person name="Edwards J."/>
            <person name="Fryman J."/>
            <person name="Haakensen B."/>
            <person name="Lamar E."/>
            <person name="Latreille P."/>
            <person name="Leonard S."/>
            <person name="Meyer R."/>
            <person name="Mulvaney E."/>
            <person name="Ozersky P."/>
            <person name="Riley A."/>
            <person name="Strowmatt C."/>
            <person name="Wagner-McPherson C."/>
            <person name="Wollam A."/>
            <person name="Yoakum M."/>
            <person name="Bell M."/>
            <person name="Dedhia N."/>
            <person name="Parnell L."/>
            <person name="Shah R."/>
            <person name="Rodriguez M."/>
            <person name="Hoon See L."/>
            <person name="Vil D."/>
            <person name="Baker J."/>
            <person name="Kirchoff K."/>
            <person name="Toth K."/>
            <person name="King L."/>
            <person name="Bahret A."/>
            <person name="Miller B."/>
            <person name="Marra M.A."/>
            <person name="Martienssen R."/>
            <person name="McCombie W.R."/>
            <person name="Wilson R.K."/>
            <person name="Murphy G."/>
            <person name="Bancroft I."/>
            <person name="Volckaert G."/>
            <person name="Wambutt R."/>
            <person name="Duesterhoeft A."/>
            <person name="Stiekema W."/>
            <person name="Pohl T."/>
            <person name="Entian K.-D."/>
            <person name="Terryn N."/>
            <person name="Hartley N."/>
            <person name="Bent E."/>
            <person name="Johnson S."/>
            <person name="Langham S.-A."/>
            <person name="McCullagh B."/>
            <person name="Robben J."/>
            <person name="Grymonprez B."/>
            <person name="Zimmermann W."/>
            <person name="Ramsperger U."/>
            <person name="Wedler H."/>
            <person name="Balke K."/>
            <person name="Wedler E."/>
            <person name="Peters S."/>
            <person name="van Staveren M."/>
            <person name="Dirkse W."/>
            <person name="Mooijman P."/>
            <person name="Klein Lankhorst R."/>
            <person name="Weitzenegger T."/>
            <person name="Bothe G."/>
            <person name="Rose M."/>
            <person name="Hauf J."/>
            <person name="Berneiser S."/>
            <person name="Hempel S."/>
            <person name="Feldpausch M."/>
            <person name="Lamberth S."/>
            <person name="Villarroel R."/>
            <person name="Gielen J."/>
            <person name="Ardiles W."/>
            <person name="Bents O."/>
            <person name="Lemcke K."/>
            <person name="Kolesov G."/>
            <person name="Mayer K.F.X."/>
            <person name="Rudd S."/>
            <person name="Schoof H."/>
            <person name="Schueller C."/>
            <person name="Zaccaria P."/>
            <person name="Mewes H.-W."/>
            <person name="Bevan M."/>
            <person name="Fransz P.F."/>
        </authorList>
    </citation>
    <scope>NUCLEOTIDE SEQUENCE [LARGE SCALE GENOMIC DNA]</scope>
    <source>
        <strain>cv. Columbia</strain>
    </source>
</reference>
<reference key="2">
    <citation type="journal article" date="2017" name="Plant J.">
        <title>Araport11: a complete reannotation of the Arabidopsis thaliana reference genome.</title>
        <authorList>
            <person name="Cheng C.Y."/>
            <person name="Krishnakumar V."/>
            <person name="Chan A.P."/>
            <person name="Thibaud-Nissen F."/>
            <person name="Schobel S."/>
            <person name="Town C.D."/>
        </authorList>
    </citation>
    <scope>GENOME REANNOTATION</scope>
    <source>
        <strain>cv. Columbia</strain>
    </source>
</reference>
<reference key="3">
    <citation type="journal article" date="2004" name="Prog. Lipid Res.">
        <title>GDSL family of serine esterases/lipases.</title>
        <authorList>
            <person name="Akoh C.C."/>
            <person name="Lee G.-C."/>
            <person name="Liaw Y.-C."/>
            <person name="Huang T.-H."/>
            <person name="Shaw J.-F."/>
        </authorList>
    </citation>
    <scope>REVIEW</scope>
</reference>
<reference key="4">
    <citation type="journal article" date="2008" name="Pak. J. Biol. Sci.">
        <title>Sequence analysis of GDSL lipase gene family in Arabidopsis thaliana.</title>
        <authorList>
            <person name="Ling H."/>
        </authorList>
    </citation>
    <scope>GENE FAMILY</scope>
</reference>
<name>GDL70_ARATH</name>
<comment type="similarity">
    <text evidence="2">Belongs to the 'GDSL' lipolytic enzyme family.</text>
</comment>
<organism>
    <name type="scientific">Arabidopsis thaliana</name>
    <name type="common">Mouse-ear cress</name>
    <dbReference type="NCBI Taxonomy" id="3702"/>
    <lineage>
        <taxon>Eukaryota</taxon>
        <taxon>Viridiplantae</taxon>
        <taxon>Streptophyta</taxon>
        <taxon>Embryophyta</taxon>
        <taxon>Tracheophyta</taxon>
        <taxon>Spermatophyta</taxon>
        <taxon>Magnoliopsida</taxon>
        <taxon>eudicotyledons</taxon>
        <taxon>Gunneridae</taxon>
        <taxon>Pentapetalae</taxon>
        <taxon>rosids</taxon>
        <taxon>malvids</taxon>
        <taxon>Brassicales</taxon>
        <taxon>Brassicaceae</taxon>
        <taxon>Camelineae</taxon>
        <taxon>Arabidopsis</taxon>
    </lineage>
</organism>
<feature type="chain" id="PRO_0000367410" description="GDSL esterase/lipase At5g03600">
    <location>
        <begin position="1"/>
        <end position="322"/>
    </location>
</feature>
<feature type="active site" description="Nucleophile" evidence="1">
    <location>
        <position position="21"/>
    </location>
</feature>
<feature type="active site" evidence="1">
    <location>
        <position position="295"/>
    </location>
</feature>
<feature type="active site" evidence="1">
    <location>
        <position position="298"/>
    </location>
</feature>
<protein>
    <recommendedName>
        <fullName>GDSL esterase/lipase At5g03600</fullName>
        <ecNumber>3.1.1.-</ecNumber>
    </recommendedName>
</protein>
<sequence>MGSNQLLRPRKVPKLFVFGDSYADTGNTKRDTEAWAIPYGITFPGKPSGRYCDGLIATDFLEKVLGAESPYLYRTHGRDKGLKRGMNFAFGGSKMLDSSPNSPFPNITAQVNFLVDLVLAGRVYGDITPSDVSLISYAGGDYIYYIDQNRPAAGLKALVEKVVDNLRVNMIVLGGLLFKKIAVTSLQPIGCLPSYTSASSFKSCNESQSALVELHNKLLKKVVAKLNEQSRVMKKEQHFFIIDIHNAFMTVMKNKGSKRFKNPMKSCCEGYCGRSSDGGKLYTLCDDPKSFFFWDAVHPTQEGWRSIYSVLGNPLTDFLTKP</sequence>
<proteinExistence type="inferred from homology"/>